<proteinExistence type="inferred from homology"/>
<evidence type="ECO:0000255" key="1">
    <source>
        <dbReference type="HAMAP-Rule" id="MF_00267"/>
    </source>
</evidence>
<evidence type="ECO:0000256" key="2">
    <source>
        <dbReference type="SAM" id="MobiDB-lite"/>
    </source>
</evidence>
<sequence>MSNTPIELKGSSFTLSVVHLHEAEPKVIHQALEDKIAQAPAFLKHAPVVLNVSALEDPVNWSAMHKAVSATGLRVIGVSGCKDAQLKAEIEKMGLPILTEGKEKAPRPAPAPQAPAQNTTPVTKTRLIDTPVRSGQRIYAPQCDLIVTSHVSAGAELIADGNIHVYGMMRGRALAGASGDRETQIFCTNLMAELVSIAGEYWLSDQIPAEFYGKAARLQLVENALTVQPLN</sequence>
<feature type="chain" id="PRO_1000114277" description="Probable septum site-determining protein MinC">
    <location>
        <begin position="1"/>
        <end position="231"/>
    </location>
</feature>
<feature type="region of interest" description="Disordered" evidence="2">
    <location>
        <begin position="102"/>
        <end position="125"/>
    </location>
</feature>
<comment type="function">
    <text evidence="1">Cell division inhibitor that blocks the formation of polar Z ring septums. Rapidly oscillates between the poles of the cell to destabilize FtsZ filaments that have formed before they mature into polar Z rings. Prevents FtsZ polymerization.</text>
</comment>
<comment type="subunit">
    <text evidence="1">Interacts with MinD and FtsZ.</text>
</comment>
<comment type="similarity">
    <text evidence="1">Belongs to the MinC family.</text>
</comment>
<name>MINC_ECO5E</name>
<accession>B5YXJ9</accession>
<organism>
    <name type="scientific">Escherichia coli O157:H7 (strain EC4115 / EHEC)</name>
    <dbReference type="NCBI Taxonomy" id="444450"/>
    <lineage>
        <taxon>Bacteria</taxon>
        <taxon>Pseudomonadati</taxon>
        <taxon>Pseudomonadota</taxon>
        <taxon>Gammaproteobacteria</taxon>
        <taxon>Enterobacterales</taxon>
        <taxon>Enterobacteriaceae</taxon>
        <taxon>Escherichia</taxon>
    </lineage>
</organism>
<protein>
    <recommendedName>
        <fullName evidence="1">Probable septum site-determining protein MinC</fullName>
    </recommendedName>
</protein>
<dbReference type="EMBL" id="CP001164">
    <property type="protein sequence ID" value="ACI34716.1"/>
    <property type="molecule type" value="Genomic_DNA"/>
</dbReference>
<dbReference type="RefSeq" id="WP_000072536.1">
    <property type="nucleotide sequence ID" value="NC_011353.1"/>
</dbReference>
<dbReference type="SMR" id="B5YXJ9"/>
<dbReference type="GeneID" id="93776258"/>
<dbReference type="KEGG" id="ecf:ECH74115_1661"/>
<dbReference type="HOGENOM" id="CLU_067812_0_1_6"/>
<dbReference type="GO" id="GO:0000902">
    <property type="term" value="P:cell morphogenesis"/>
    <property type="evidence" value="ECO:0007669"/>
    <property type="project" value="InterPro"/>
</dbReference>
<dbReference type="GO" id="GO:0000917">
    <property type="term" value="P:division septum assembly"/>
    <property type="evidence" value="ECO:0007669"/>
    <property type="project" value="UniProtKB-KW"/>
</dbReference>
<dbReference type="GO" id="GO:0051302">
    <property type="term" value="P:regulation of cell division"/>
    <property type="evidence" value="ECO:0007669"/>
    <property type="project" value="InterPro"/>
</dbReference>
<dbReference type="GO" id="GO:1901891">
    <property type="term" value="P:regulation of cell septum assembly"/>
    <property type="evidence" value="ECO:0007669"/>
    <property type="project" value="InterPro"/>
</dbReference>
<dbReference type="FunFam" id="2.160.20.70:FF:000002">
    <property type="entry name" value="Probable septum site-determining protein MinC"/>
    <property type="match status" value="1"/>
</dbReference>
<dbReference type="Gene3D" id="2.160.20.70">
    <property type="match status" value="1"/>
</dbReference>
<dbReference type="Gene3D" id="3.30.70.260">
    <property type="match status" value="1"/>
</dbReference>
<dbReference type="HAMAP" id="MF_00267">
    <property type="entry name" value="MinC"/>
    <property type="match status" value="1"/>
</dbReference>
<dbReference type="InterPro" id="IPR016098">
    <property type="entry name" value="CAP/MinC_C"/>
</dbReference>
<dbReference type="InterPro" id="IPR013033">
    <property type="entry name" value="MinC"/>
</dbReference>
<dbReference type="InterPro" id="IPR036145">
    <property type="entry name" value="MinC_C_sf"/>
</dbReference>
<dbReference type="InterPro" id="IPR007874">
    <property type="entry name" value="MinC_N"/>
</dbReference>
<dbReference type="InterPro" id="IPR005526">
    <property type="entry name" value="Septum_form_inhib_MinC_C"/>
</dbReference>
<dbReference type="NCBIfam" id="TIGR01222">
    <property type="entry name" value="minC"/>
    <property type="match status" value="1"/>
</dbReference>
<dbReference type="PANTHER" id="PTHR34108">
    <property type="entry name" value="SEPTUM SITE-DETERMINING PROTEIN MINC"/>
    <property type="match status" value="1"/>
</dbReference>
<dbReference type="PANTHER" id="PTHR34108:SF1">
    <property type="entry name" value="SEPTUM SITE-DETERMINING PROTEIN MINC"/>
    <property type="match status" value="1"/>
</dbReference>
<dbReference type="Pfam" id="PF03775">
    <property type="entry name" value="MinC_C"/>
    <property type="match status" value="1"/>
</dbReference>
<dbReference type="Pfam" id="PF05209">
    <property type="entry name" value="MinC_N"/>
    <property type="match status" value="1"/>
</dbReference>
<dbReference type="SUPFAM" id="SSF63848">
    <property type="entry name" value="Cell-division inhibitor MinC, C-terminal domain"/>
    <property type="match status" value="1"/>
</dbReference>
<reference key="1">
    <citation type="journal article" date="2011" name="Proc. Natl. Acad. Sci. U.S.A.">
        <title>Genomic anatomy of Escherichia coli O157:H7 outbreaks.</title>
        <authorList>
            <person name="Eppinger M."/>
            <person name="Mammel M.K."/>
            <person name="Leclerc J.E."/>
            <person name="Ravel J."/>
            <person name="Cebula T.A."/>
        </authorList>
    </citation>
    <scope>NUCLEOTIDE SEQUENCE [LARGE SCALE GENOMIC DNA]</scope>
    <source>
        <strain>EC4115 / EHEC</strain>
    </source>
</reference>
<keyword id="KW-0131">Cell cycle</keyword>
<keyword id="KW-0132">Cell division</keyword>
<keyword id="KW-0717">Septation</keyword>
<gene>
    <name evidence="1" type="primary">minC</name>
    <name type="ordered locus">ECH74115_1661</name>
</gene>